<name>RL34_SALAI</name>
<dbReference type="EMBL" id="CP000850">
    <property type="protein sequence ID" value="ABW00854.1"/>
    <property type="molecule type" value="Genomic_DNA"/>
</dbReference>
<dbReference type="SMR" id="A8LYF8"/>
<dbReference type="STRING" id="391037.Sare_5111"/>
<dbReference type="KEGG" id="saq:Sare_5111"/>
<dbReference type="PATRIC" id="fig|391037.6.peg.5160"/>
<dbReference type="eggNOG" id="COG0230">
    <property type="taxonomic scope" value="Bacteria"/>
</dbReference>
<dbReference type="HOGENOM" id="CLU_129938_2_1_11"/>
<dbReference type="OrthoDB" id="9804832at2"/>
<dbReference type="GO" id="GO:1990904">
    <property type="term" value="C:ribonucleoprotein complex"/>
    <property type="evidence" value="ECO:0007669"/>
    <property type="project" value="UniProtKB-KW"/>
</dbReference>
<dbReference type="GO" id="GO:0005840">
    <property type="term" value="C:ribosome"/>
    <property type="evidence" value="ECO:0007669"/>
    <property type="project" value="UniProtKB-KW"/>
</dbReference>
<dbReference type="GO" id="GO:0003735">
    <property type="term" value="F:structural constituent of ribosome"/>
    <property type="evidence" value="ECO:0007669"/>
    <property type="project" value="InterPro"/>
</dbReference>
<dbReference type="GO" id="GO:0006412">
    <property type="term" value="P:translation"/>
    <property type="evidence" value="ECO:0007669"/>
    <property type="project" value="UniProtKB-UniRule"/>
</dbReference>
<dbReference type="FunFam" id="1.10.287.3980:FF:000001">
    <property type="entry name" value="Mitochondrial ribosomal protein L34"/>
    <property type="match status" value="1"/>
</dbReference>
<dbReference type="Gene3D" id="1.10.287.3980">
    <property type="match status" value="1"/>
</dbReference>
<dbReference type="HAMAP" id="MF_00391">
    <property type="entry name" value="Ribosomal_bL34"/>
    <property type="match status" value="1"/>
</dbReference>
<dbReference type="InterPro" id="IPR000271">
    <property type="entry name" value="Ribosomal_bL34"/>
</dbReference>
<dbReference type="InterPro" id="IPR020939">
    <property type="entry name" value="Ribosomal_bL34_CS"/>
</dbReference>
<dbReference type="NCBIfam" id="TIGR01030">
    <property type="entry name" value="rpmH_bact"/>
    <property type="match status" value="1"/>
</dbReference>
<dbReference type="PANTHER" id="PTHR14503:SF4">
    <property type="entry name" value="LARGE RIBOSOMAL SUBUNIT PROTEIN BL34M"/>
    <property type="match status" value="1"/>
</dbReference>
<dbReference type="PANTHER" id="PTHR14503">
    <property type="entry name" value="MITOCHONDRIAL RIBOSOMAL PROTEIN 34 FAMILY MEMBER"/>
    <property type="match status" value="1"/>
</dbReference>
<dbReference type="Pfam" id="PF00468">
    <property type="entry name" value="Ribosomal_L34"/>
    <property type="match status" value="1"/>
</dbReference>
<dbReference type="PROSITE" id="PS00784">
    <property type="entry name" value="RIBOSOMAL_L34"/>
    <property type="match status" value="1"/>
</dbReference>
<reference key="1">
    <citation type="submission" date="2007-10" db="EMBL/GenBank/DDBJ databases">
        <title>Complete sequence of Salinispora arenicola CNS-205.</title>
        <authorList>
            <consortium name="US DOE Joint Genome Institute"/>
            <person name="Copeland A."/>
            <person name="Lucas S."/>
            <person name="Lapidus A."/>
            <person name="Barry K."/>
            <person name="Glavina del Rio T."/>
            <person name="Dalin E."/>
            <person name="Tice H."/>
            <person name="Pitluck S."/>
            <person name="Foster B."/>
            <person name="Schmutz J."/>
            <person name="Larimer F."/>
            <person name="Land M."/>
            <person name="Hauser L."/>
            <person name="Kyrpides N."/>
            <person name="Ivanova N."/>
            <person name="Jensen P.R."/>
            <person name="Moore B.S."/>
            <person name="Penn K."/>
            <person name="Jenkins C."/>
            <person name="Udwary D."/>
            <person name="Xiang L."/>
            <person name="Gontang E."/>
            <person name="Richardson P."/>
        </authorList>
    </citation>
    <scope>NUCLEOTIDE SEQUENCE [LARGE SCALE GENOMIC DNA]</scope>
    <source>
        <strain>CNS-205</strain>
    </source>
</reference>
<accession>A8LYF8</accession>
<gene>
    <name evidence="1" type="primary">rpmH</name>
    <name type="ordered locus">Sare_5111</name>
</gene>
<evidence type="ECO:0000255" key="1">
    <source>
        <dbReference type="HAMAP-Rule" id="MF_00391"/>
    </source>
</evidence>
<evidence type="ECO:0000305" key="2"/>
<protein>
    <recommendedName>
        <fullName evidence="1">Large ribosomal subunit protein bL34</fullName>
    </recommendedName>
    <alternativeName>
        <fullName evidence="2">50S ribosomal protein L34</fullName>
    </alternativeName>
</protein>
<proteinExistence type="inferred from homology"/>
<comment type="similarity">
    <text evidence="1">Belongs to the bacterial ribosomal protein bL34 family.</text>
</comment>
<keyword id="KW-0687">Ribonucleoprotein</keyword>
<keyword id="KW-0689">Ribosomal protein</keyword>
<feature type="chain" id="PRO_1000080263" description="Large ribosomal subunit protein bL34">
    <location>
        <begin position="1"/>
        <end position="45"/>
    </location>
</feature>
<organism>
    <name type="scientific">Salinispora arenicola (strain CNS-205)</name>
    <dbReference type="NCBI Taxonomy" id="391037"/>
    <lineage>
        <taxon>Bacteria</taxon>
        <taxon>Bacillati</taxon>
        <taxon>Actinomycetota</taxon>
        <taxon>Actinomycetes</taxon>
        <taxon>Micromonosporales</taxon>
        <taxon>Micromonosporaceae</taxon>
        <taxon>Salinispora</taxon>
    </lineage>
</organism>
<sequence>MSKRTFQPNNRRRAKTHGFRLRMRTRAGRAIISTRRAKGRTRLAA</sequence>